<proteinExistence type="inferred from homology"/>
<comment type="function">
    <text evidence="1">Catalyzes the phosphorylation of the position 2 hydroxy group of 4-diphosphocytidyl-2C-methyl-D-erythritol.</text>
</comment>
<comment type="catalytic activity">
    <reaction evidence="1">
        <text>4-CDP-2-C-methyl-D-erythritol + ATP = 4-CDP-2-C-methyl-D-erythritol 2-phosphate + ADP + H(+)</text>
        <dbReference type="Rhea" id="RHEA:18437"/>
        <dbReference type="ChEBI" id="CHEBI:15378"/>
        <dbReference type="ChEBI" id="CHEBI:30616"/>
        <dbReference type="ChEBI" id="CHEBI:57823"/>
        <dbReference type="ChEBI" id="CHEBI:57919"/>
        <dbReference type="ChEBI" id="CHEBI:456216"/>
        <dbReference type="EC" id="2.7.1.148"/>
    </reaction>
</comment>
<comment type="pathway">
    <text evidence="1">Isoprenoid biosynthesis; isopentenyl diphosphate biosynthesis via DXP pathway; isopentenyl diphosphate from 1-deoxy-D-xylulose 5-phosphate: step 3/6.</text>
</comment>
<comment type="similarity">
    <text evidence="1">Belongs to the GHMP kinase family. IspE subfamily.</text>
</comment>
<feature type="chain" id="PRO_0000235080" description="4-diphosphocytidyl-2-C-methyl-D-erythritol kinase">
    <location>
        <begin position="1"/>
        <end position="291"/>
    </location>
</feature>
<feature type="active site" evidence="1">
    <location>
        <position position="8"/>
    </location>
</feature>
<feature type="active site" evidence="1">
    <location>
        <position position="131"/>
    </location>
</feature>
<feature type="binding site" evidence="1">
    <location>
        <begin position="89"/>
        <end position="99"/>
    </location>
    <ligand>
        <name>ATP</name>
        <dbReference type="ChEBI" id="CHEBI:30616"/>
    </ligand>
</feature>
<reference key="1">
    <citation type="journal article" date="2005" name="Genome Res.">
        <title>The Chlamydophila abortus genome sequence reveals an array of variable proteins that contribute to interspecies variation.</title>
        <authorList>
            <person name="Thomson N.R."/>
            <person name="Yeats C."/>
            <person name="Bell K."/>
            <person name="Holden M.T.G."/>
            <person name="Bentley S.D."/>
            <person name="Livingstone M."/>
            <person name="Cerdeno-Tarraga A.-M."/>
            <person name="Harris B."/>
            <person name="Doggett J."/>
            <person name="Ormond D."/>
            <person name="Mungall K."/>
            <person name="Clarke K."/>
            <person name="Feltwell T."/>
            <person name="Hance Z."/>
            <person name="Sanders M."/>
            <person name="Quail M.A."/>
            <person name="Price C."/>
            <person name="Barrell B.G."/>
            <person name="Parkhill J."/>
            <person name="Longbottom D."/>
        </authorList>
    </citation>
    <scope>NUCLEOTIDE SEQUENCE [LARGE SCALE GENOMIC DNA]</scope>
    <source>
        <strain>DSM 27085 / S26/3</strain>
    </source>
</reference>
<sequence>MDLFSPAKLNLFLKLHGKTSHGFHEMTTLYQVIDFGDRLSLESSSEDSLICNLPELNTPQNLIWKSIQVFRDYTQIYSPVAWRLYKCIPIGSGIGGGSSNAATALYALNQHFQTQLSNDVLQELGKKIGMDVPLFFSLGSALGIGCGEEILSYDNDHRDERYVLYFSDQPVLTKDAFSYVRPEDFSKREECLSLYARNNDLEQSVFRFRKDLEEKKHMLKRIWSPFNAHVRMSGAGATLFVSYSREIETDPSTAKALHATIHNSQGLLVNSLRKYNGWFEHGDNLLATTRQ</sequence>
<evidence type="ECO:0000255" key="1">
    <source>
        <dbReference type="HAMAP-Rule" id="MF_00061"/>
    </source>
</evidence>
<organism>
    <name type="scientific">Chlamydia abortus (strain DSM 27085 / S26/3)</name>
    <name type="common">Chlamydophila abortus</name>
    <dbReference type="NCBI Taxonomy" id="218497"/>
    <lineage>
        <taxon>Bacteria</taxon>
        <taxon>Pseudomonadati</taxon>
        <taxon>Chlamydiota</taxon>
        <taxon>Chlamydiia</taxon>
        <taxon>Chlamydiales</taxon>
        <taxon>Chlamydiaceae</taxon>
        <taxon>Chlamydia/Chlamydophila group</taxon>
        <taxon>Chlamydia</taxon>
    </lineage>
</organism>
<name>ISPE_CHLAB</name>
<accession>Q5L568</accession>
<dbReference type="EC" id="2.7.1.148" evidence="1"/>
<dbReference type="EMBL" id="CR848038">
    <property type="protein sequence ID" value="CAH64226.1"/>
    <property type="molecule type" value="Genomic_DNA"/>
</dbReference>
<dbReference type="RefSeq" id="WP_011097331.1">
    <property type="nucleotide sequence ID" value="NC_004552.2"/>
</dbReference>
<dbReference type="SMR" id="Q5L568"/>
<dbReference type="KEGG" id="cab:CAB784"/>
<dbReference type="eggNOG" id="COG1947">
    <property type="taxonomic scope" value="Bacteria"/>
</dbReference>
<dbReference type="HOGENOM" id="CLU_053057_3_0_0"/>
<dbReference type="OrthoDB" id="9809438at2"/>
<dbReference type="UniPathway" id="UPA00056">
    <property type="reaction ID" value="UER00094"/>
</dbReference>
<dbReference type="Proteomes" id="UP000001012">
    <property type="component" value="Chromosome"/>
</dbReference>
<dbReference type="GO" id="GO:0050515">
    <property type="term" value="F:4-(cytidine 5'-diphospho)-2-C-methyl-D-erythritol kinase activity"/>
    <property type="evidence" value="ECO:0007669"/>
    <property type="project" value="UniProtKB-UniRule"/>
</dbReference>
<dbReference type="GO" id="GO:0005524">
    <property type="term" value="F:ATP binding"/>
    <property type="evidence" value="ECO:0007669"/>
    <property type="project" value="UniProtKB-UniRule"/>
</dbReference>
<dbReference type="GO" id="GO:0019288">
    <property type="term" value="P:isopentenyl diphosphate biosynthetic process, methylerythritol 4-phosphate pathway"/>
    <property type="evidence" value="ECO:0007669"/>
    <property type="project" value="UniProtKB-UniRule"/>
</dbReference>
<dbReference type="GO" id="GO:0016114">
    <property type="term" value="P:terpenoid biosynthetic process"/>
    <property type="evidence" value="ECO:0007669"/>
    <property type="project" value="InterPro"/>
</dbReference>
<dbReference type="Gene3D" id="3.30.230.10">
    <property type="match status" value="1"/>
</dbReference>
<dbReference type="Gene3D" id="3.30.70.890">
    <property type="entry name" value="GHMP kinase, C-terminal domain"/>
    <property type="match status" value="1"/>
</dbReference>
<dbReference type="HAMAP" id="MF_00061">
    <property type="entry name" value="IspE"/>
    <property type="match status" value="1"/>
</dbReference>
<dbReference type="InterPro" id="IPR036554">
    <property type="entry name" value="GHMP_kinase_C_sf"/>
</dbReference>
<dbReference type="InterPro" id="IPR006204">
    <property type="entry name" value="GHMP_kinase_N_dom"/>
</dbReference>
<dbReference type="InterPro" id="IPR004424">
    <property type="entry name" value="IspE"/>
</dbReference>
<dbReference type="InterPro" id="IPR020568">
    <property type="entry name" value="Ribosomal_Su5_D2-typ_SF"/>
</dbReference>
<dbReference type="InterPro" id="IPR014721">
    <property type="entry name" value="Ribsml_uS5_D2-typ_fold_subgr"/>
</dbReference>
<dbReference type="NCBIfam" id="TIGR00154">
    <property type="entry name" value="ispE"/>
    <property type="match status" value="1"/>
</dbReference>
<dbReference type="PANTHER" id="PTHR43527">
    <property type="entry name" value="4-DIPHOSPHOCYTIDYL-2-C-METHYL-D-ERYTHRITOL KINASE, CHLOROPLASTIC"/>
    <property type="match status" value="1"/>
</dbReference>
<dbReference type="PANTHER" id="PTHR43527:SF2">
    <property type="entry name" value="4-DIPHOSPHOCYTIDYL-2-C-METHYL-D-ERYTHRITOL KINASE, CHLOROPLASTIC"/>
    <property type="match status" value="1"/>
</dbReference>
<dbReference type="Pfam" id="PF00288">
    <property type="entry name" value="GHMP_kinases_N"/>
    <property type="match status" value="1"/>
</dbReference>
<dbReference type="PIRSF" id="PIRSF010376">
    <property type="entry name" value="IspE"/>
    <property type="match status" value="1"/>
</dbReference>
<dbReference type="SUPFAM" id="SSF55060">
    <property type="entry name" value="GHMP Kinase, C-terminal domain"/>
    <property type="match status" value="1"/>
</dbReference>
<dbReference type="SUPFAM" id="SSF54211">
    <property type="entry name" value="Ribosomal protein S5 domain 2-like"/>
    <property type="match status" value="1"/>
</dbReference>
<gene>
    <name evidence="1" type="primary">ispE</name>
    <name type="ordered locus">CAB784</name>
</gene>
<protein>
    <recommendedName>
        <fullName evidence="1">4-diphosphocytidyl-2-C-methyl-D-erythritol kinase</fullName>
        <shortName evidence="1">CMK</shortName>
        <ecNumber evidence="1">2.7.1.148</ecNumber>
    </recommendedName>
    <alternativeName>
        <fullName evidence="1">4-(cytidine-5'-diphospho)-2-C-methyl-D-erythritol kinase</fullName>
    </alternativeName>
</protein>
<keyword id="KW-0067">ATP-binding</keyword>
<keyword id="KW-0414">Isoprene biosynthesis</keyword>
<keyword id="KW-0418">Kinase</keyword>
<keyword id="KW-0547">Nucleotide-binding</keyword>
<keyword id="KW-0808">Transferase</keyword>